<keyword id="KW-1185">Reference proteome</keyword>
<protein>
    <recommendedName>
        <fullName>Putative uncharacterized protein GSN-AS1</fullName>
    </recommendedName>
    <alternativeName>
        <fullName>GSN antisense RNA 1</fullName>
    </alternativeName>
    <alternativeName>
        <fullName>GSN antisense gene protein 1</fullName>
    </alternativeName>
    <alternativeName>
        <fullName>Protein MOST-2</fullName>
    </alternativeName>
</protein>
<feature type="chain" id="PRO_0000271125" description="Putative uncharacterized protein GSN-AS1">
    <location>
        <begin position="1"/>
        <end position="163"/>
    </location>
</feature>
<feature type="region of interest" description="Disordered" evidence="1">
    <location>
        <begin position="1"/>
        <end position="21"/>
    </location>
</feature>
<feature type="region of interest" description="Disordered" evidence="1">
    <location>
        <begin position="71"/>
        <end position="112"/>
    </location>
</feature>
<feature type="compositionally biased region" description="Basic and acidic residues" evidence="1">
    <location>
        <begin position="1"/>
        <end position="10"/>
    </location>
</feature>
<feature type="compositionally biased region" description="Polar residues" evidence="1">
    <location>
        <begin position="90"/>
        <end position="105"/>
    </location>
</feature>
<gene>
    <name type="primary">GSN-AS1</name>
    <name type="synonym">C9orf31</name>
    <name type="synonym">MOST2</name>
</gene>
<proteinExistence type="uncertain"/>
<comment type="caution">
    <text evidence="2">Product of a dubious CDS prediction.</text>
</comment>
<accession>Q9NRJ2</accession>
<dbReference type="EMBL" id="AF220263">
    <property type="protein sequence ID" value="AAF89164.1"/>
    <property type="molecule type" value="mRNA"/>
</dbReference>
<dbReference type="EMBL" id="AL513122">
    <property type="status" value="NOT_ANNOTATED_CDS"/>
    <property type="molecule type" value="Genomic_DNA"/>
</dbReference>
<dbReference type="iPTMnet" id="Q9NRJ2"/>
<dbReference type="PhosphoSitePlus" id="Q9NRJ2"/>
<dbReference type="BioMuta" id="HGNC:23372"/>
<dbReference type="jPOST" id="Q9NRJ2"/>
<dbReference type="AGR" id="HGNC:23372"/>
<dbReference type="GeneCards" id="GSN-AS1"/>
<dbReference type="HGNC" id="HGNC:23372">
    <property type="gene designation" value="GSN-AS1"/>
</dbReference>
<dbReference type="neXtProt" id="NX_Q9NRJ2"/>
<dbReference type="InParanoid" id="Q9NRJ2"/>
<dbReference type="PAN-GO" id="Q9NRJ2">
    <property type="GO annotations" value="0 GO annotations based on evolutionary models"/>
</dbReference>
<dbReference type="PhylomeDB" id="Q9NRJ2"/>
<dbReference type="Pharos" id="Q9NRJ2">
    <property type="development level" value="Tdark"/>
</dbReference>
<dbReference type="Proteomes" id="UP000005640">
    <property type="component" value="Unplaced"/>
</dbReference>
<dbReference type="RNAct" id="Q9NRJ2">
    <property type="molecule type" value="protein"/>
</dbReference>
<name>GSAS1_HUMAN</name>
<reference key="1">
    <citation type="submission" date="1999-12" db="EMBL/GenBank/DDBJ databases">
        <title>MOST-2, a novel intronless human gene derived from a MOLT-4 expressed sequence tag.</title>
        <authorList>
            <person name="Chow V.T.K."/>
            <person name="Tan Y.C."/>
        </authorList>
    </citation>
    <scope>NUCLEOTIDE SEQUENCE [MRNA]</scope>
</reference>
<reference key="2">
    <citation type="journal article" date="2004" name="Nature">
        <title>DNA sequence and analysis of human chromosome 9.</title>
        <authorList>
            <person name="Humphray S.J."/>
            <person name="Oliver K."/>
            <person name="Hunt A.R."/>
            <person name="Plumb R.W."/>
            <person name="Loveland J.E."/>
            <person name="Howe K.L."/>
            <person name="Andrews T.D."/>
            <person name="Searle S."/>
            <person name="Hunt S.E."/>
            <person name="Scott C.E."/>
            <person name="Jones M.C."/>
            <person name="Ainscough R."/>
            <person name="Almeida J.P."/>
            <person name="Ambrose K.D."/>
            <person name="Ashwell R.I.S."/>
            <person name="Babbage A.K."/>
            <person name="Babbage S."/>
            <person name="Bagguley C.L."/>
            <person name="Bailey J."/>
            <person name="Banerjee R."/>
            <person name="Barker D.J."/>
            <person name="Barlow K.F."/>
            <person name="Bates K."/>
            <person name="Beasley H."/>
            <person name="Beasley O."/>
            <person name="Bird C.P."/>
            <person name="Bray-Allen S."/>
            <person name="Brown A.J."/>
            <person name="Brown J.Y."/>
            <person name="Burford D."/>
            <person name="Burrill W."/>
            <person name="Burton J."/>
            <person name="Carder C."/>
            <person name="Carter N.P."/>
            <person name="Chapman J.C."/>
            <person name="Chen Y."/>
            <person name="Clarke G."/>
            <person name="Clark S.Y."/>
            <person name="Clee C.M."/>
            <person name="Clegg S."/>
            <person name="Collier R.E."/>
            <person name="Corby N."/>
            <person name="Crosier M."/>
            <person name="Cummings A.T."/>
            <person name="Davies J."/>
            <person name="Dhami P."/>
            <person name="Dunn M."/>
            <person name="Dutta I."/>
            <person name="Dyer L.W."/>
            <person name="Earthrowl M.E."/>
            <person name="Faulkner L."/>
            <person name="Fleming C.J."/>
            <person name="Frankish A."/>
            <person name="Frankland J.A."/>
            <person name="French L."/>
            <person name="Fricker D.G."/>
            <person name="Garner P."/>
            <person name="Garnett J."/>
            <person name="Ghori J."/>
            <person name="Gilbert J.G.R."/>
            <person name="Glison C."/>
            <person name="Grafham D.V."/>
            <person name="Gribble S."/>
            <person name="Griffiths C."/>
            <person name="Griffiths-Jones S."/>
            <person name="Grocock R."/>
            <person name="Guy J."/>
            <person name="Hall R.E."/>
            <person name="Hammond S."/>
            <person name="Harley J.L."/>
            <person name="Harrison E.S.I."/>
            <person name="Hart E.A."/>
            <person name="Heath P.D."/>
            <person name="Henderson C.D."/>
            <person name="Hopkins B.L."/>
            <person name="Howard P.J."/>
            <person name="Howden P.J."/>
            <person name="Huckle E."/>
            <person name="Johnson C."/>
            <person name="Johnson D."/>
            <person name="Joy A.A."/>
            <person name="Kay M."/>
            <person name="Keenan S."/>
            <person name="Kershaw J.K."/>
            <person name="Kimberley A.M."/>
            <person name="King A."/>
            <person name="Knights A."/>
            <person name="Laird G.K."/>
            <person name="Langford C."/>
            <person name="Lawlor S."/>
            <person name="Leongamornlert D.A."/>
            <person name="Leversha M."/>
            <person name="Lloyd C."/>
            <person name="Lloyd D.M."/>
            <person name="Lovell J."/>
            <person name="Martin S."/>
            <person name="Mashreghi-Mohammadi M."/>
            <person name="Matthews L."/>
            <person name="McLaren S."/>
            <person name="McLay K.E."/>
            <person name="McMurray A."/>
            <person name="Milne S."/>
            <person name="Nickerson T."/>
            <person name="Nisbett J."/>
            <person name="Nordsiek G."/>
            <person name="Pearce A.V."/>
            <person name="Peck A.I."/>
            <person name="Porter K.M."/>
            <person name="Pandian R."/>
            <person name="Pelan S."/>
            <person name="Phillimore B."/>
            <person name="Povey S."/>
            <person name="Ramsey Y."/>
            <person name="Rand V."/>
            <person name="Scharfe M."/>
            <person name="Sehra H.K."/>
            <person name="Shownkeen R."/>
            <person name="Sims S.K."/>
            <person name="Skuce C.D."/>
            <person name="Smith M."/>
            <person name="Steward C.A."/>
            <person name="Swarbreck D."/>
            <person name="Sycamore N."/>
            <person name="Tester J."/>
            <person name="Thorpe A."/>
            <person name="Tracey A."/>
            <person name="Tromans A."/>
            <person name="Thomas D.W."/>
            <person name="Wall M."/>
            <person name="Wallis J.M."/>
            <person name="West A.P."/>
            <person name="Whitehead S.L."/>
            <person name="Willey D.L."/>
            <person name="Williams S.A."/>
            <person name="Wilming L."/>
            <person name="Wray P.W."/>
            <person name="Young L."/>
            <person name="Ashurst J.L."/>
            <person name="Coulson A."/>
            <person name="Blocker H."/>
            <person name="Durbin R.M."/>
            <person name="Sulston J.E."/>
            <person name="Hubbard T."/>
            <person name="Jackson M.J."/>
            <person name="Bentley D.R."/>
            <person name="Beck S."/>
            <person name="Rogers J."/>
            <person name="Dunham I."/>
        </authorList>
    </citation>
    <scope>NUCLEOTIDE SEQUENCE [LARGE SCALE GENOMIC DNA]</scope>
</reference>
<evidence type="ECO:0000256" key="1">
    <source>
        <dbReference type="SAM" id="MobiDB-lite"/>
    </source>
</evidence>
<evidence type="ECO:0000305" key="2"/>
<organism>
    <name type="scientific">Homo sapiens</name>
    <name type="common">Human</name>
    <dbReference type="NCBI Taxonomy" id="9606"/>
    <lineage>
        <taxon>Eukaryota</taxon>
        <taxon>Metazoa</taxon>
        <taxon>Chordata</taxon>
        <taxon>Craniata</taxon>
        <taxon>Vertebrata</taxon>
        <taxon>Euteleostomi</taxon>
        <taxon>Mammalia</taxon>
        <taxon>Eutheria</taxon>
        <taxon>Euarchontoglires</taxon>
        <taxon>Primates</taxon>
        <taxon>Haplorrhini</taxon>
        <taxon>Catarrhini</taxon>
        <taxon>Hominidae</taxon>
        <taxon>Homo</taxon>
    </lineage>
</organism>
<sequence length="163" mass="17657">MTHPLPHDSHTSGAPPLVNKSRDLANGPPFFSPLQSLWEEFLHLLFMGTLLFYRIATKALRGKATLLKSHSKQPAQPGWEPGIRAPSPVPASSLQDHSRLTSLSRTGKEQRRTLSLIRKTSGTPTESTVATAAASTTEVPSRLPWAARAGFKRTTGVCIALPT</sequence>